<feature type="transit peptide" description="Mitochondrion" evidence="2">
    <location>
        <begin position="1"/>
        <end position="11"/>
    </location>
</feature>
<feature type="chain" id="PRO_0000398110" description="Arginine biosynthesis bifunctional protein ArgJ 2 alpha chain" evidence="1">
    <location>
        <begin position="12"/>
        <end position="244"/>
    </location>
</feature>
<feature type="chain" id="PRO_0000398111" description="Arginine biosynthesis bifunctional protein ArgJ 2 beta chain" evidence="1">
    <location>
        <begin position="245"/>
        <end position="489"/>
    </location>
</feature>
<feature type="active site" description="Nucleophile" evidence="2">
    <location>
        <position position="245"/>
    </location>
</feature>
<feature type="binding site" evidence="2">
    <location>
        <position position="205"/>
    </location>
    <ligand>
        <name>substrate</name>
    </ligand>
</feature>
<feature type="binding site" evidence="2">
    <location>
        <position position="234"/>
    </location>
    <ligand>
        <name>substrate</name>
    </ligand>
</feature>
<feature type="binding site" evidence="2">
    <location>
        <position position="245"/>
    </location>
    <ligand>
        <name>substrate</name>
    </ligand>
</feature>
<feature type="binding site" evidence="2">
    <location>
        <position position="341"/>
    </location>
    <ligand>
        <name>substrate</name>
    </ligand>
</feature>
<feature type="binding site" evidence="2">
    <location>
        <position position="484"/>
    </location>
    <ligand>
        <name>substrate</name>
    </ligand>
</feature>
<feature type="site" description="Involved in the stabilization of negative charge on the oxyanion by the formation of the oxyanion hole" evidence="2">
    <location>
        <position position="166"/>
    </location>
</feature>
<feature type="site" description="Involved in the stabilization of negative charge on the oxyanion by the formation of the oxyanion hole" evidence="2">
    <location>
        <position position="167"/>
    </location>
</feature>
<feature type="site" description="Cleavage; by autolysis" evidence="2">
    <location>
        <begin position="244"/>
        <end position="245"/>
    </location>
</feature>
<reference key="1">
    <citation type="journal article" date="2011" name="PLoS Genet.">
        <title>Genomic analysis of the necrotrophic fungal pathogens Sclerotinia sclerotiorum and Botrytis cinerea.</title>
        <authorList>
            <person name="Amselem J."/>
            <person name="Cuomo C.A."/>
            <person name="van Kan J.A.L."/>
            <person name="Viaud M."/>
            <person name="Benito E.P."/>
            <person name="Couloux A."/>
            <person name="Coutinho P.M."/>
            <person name="de Vries R.P."/>
            <person name="Dyer P.S."/>
            <person name="Fillinger S."/>
            <person name="Fournier E."/>
            <person name="Gout L."/>
            <person name="Hahn M."/>
            <person name="Kohn L."/>
            <person name="Lapalu N."/>
            <person name="Plummer K.M."/>
            <person name="Pradier J.-M."/>
            <person name="Quevillon E."/>
            <person name="Sharon A."/>
            <person name="Simon A."/>
            <person name="ten Have A."/>
            <person name="Tudzynski B."/>
            <person name="Tudzynski P."/>
            <person name="Wincker P."/>
            <person name="Andrew M."/>
            <person name="Anthouard V."/>
            <person name="Beever R.E."/>
            <person name="Beffa R."/>
            <person name="Benoit I."/>
            <person name="Bouzid O."/>
            <person name="Brault B."/>
            <person name="Chen Z."/>
            <person name="Choquer M."/>
            <person name="Collemare J."/>
            <person name="Cotton P."/>
            <person name="Danchin E.G."/>
            <person name="Da Silva C."/>
            <person name="Gautier A."/>
            <person name="Giraud C."/>
            <person name="Giraud T."/>
            <person name="Gonzalez C."/>
            <person name="Grossetete S."/>
            <person name="Gueldener U."/>
            <person name="Henrissat B."/>
            <person name="Howlett B.J."/>
            <person name="Kodira C."/>
            <person name="Kretschmer M."/>
            <person name="Lappartient A."/>
            <person name="Leroch M."/>
            <person name="Levis C."/>
            <person name="Mauceli E."/>
            <person name="Neuveglise C."/>
            <person name="Oeser B."/>
            <person name="Pearson M."/>
            <person name="Poulain J."/>
            <person name="Poussereau N."/>
            <person name="Quesneville H."/>
            <person name="Rascle C."/>
            <person name="Schumacher J."/>
            <person name="Segurens B."/>
            <person name="Sexton A."/>
            <person name="Silva E."/>
            <person name="Sirven C."/>
            <person name="Soanes D.M."/>
            <person name="Talbot N.J."/>
            <person name="Templeton M."/>
            <person name="Yandava C."/>
            <person name="Yarden O."/>
            <person name="Zeng Q."/>
            <person name="Rollins J.A."/>
            <person name="Lebrun M.-H."/>
            <person name="Dickman M."/>
        </authorList>
    </citation>
    <scope>NUCLEOTIDE SEQUENCE [LARGE SCALE GENOMIC DNA]</scope>
    <source>
        <strain>ATCC 18683 / 1980 / Ss-1</strain>
    </source>
</reference>
<name>ARGJ2_SCLS1</name>
<dbReference type="EC" id="2.3.1.35" evidence="2"/>
<dbReference type="EC" id="2.3.1.1" evidence="2"/>
<dbReference type="EMBL" id="CH476624">
    <property type="protein sequence ID" value="EDO00885.1"/>
    <property type="molecule type" value="Genomic_DNA"/>
</dbReference>
<dbReference type="RefSeq" id="XP_001595270.1">
    <property type="nucleotide sequence ID" value="XM_001595220.1"/>
</dbReference>
<dbReference type="SMR" id="A7EDG9"/>
<dbReference type="FunCoup" id="A7EDG9">
    <property type="interactions" value="282"/>
</dbReference>
<dbReference type="STRING" id="665079.A7EDG9"/>
<dbReference type="MEROPS" id="T05.001"/>
<dbReference type="EnsemblFungi" id="EDO00885">
    <property type="protein sequence ID" value="EDO00885"/>
    <property type="gene ID" value="SS1G_03359"/>
</dbReference>
<dbReference type="GeneID" id="5491759"/>
<dbReference type="KEGG" id="ssl:SS1G_03359"/>
<dbReference type="VEuPathDB" id="FungiDB:sscle_07g057180"/>
<dbReference type="eggNOG" id="KOG2786">
    <property type="taxonomic scope" value="Eukaryota"/>
</dbReference>
<dbReference type="HOGENOM" id="CLU_027172_1_0_1"/>
<dbReference type="InParanoid" id="A7EDG9"/>
<dbReference type="OMA" id="GVGMLEP"/>
<dbReference type="OrthoDB" id="2017946at2759"/>
<dbReference type="UniPathway" id="UPA00068">
    <property type="reaction ID" value="UER00106"/>
</dbReference>
<dbReference type="UniPathway" id="UPA00068">
    <property type="reaction ID" value="UER00111"/>
</dbReference>
<dbReference type="Proteomes" id="UP000001312">
    <property type="component" value="Unassembled WGS sequence"/>
</dbReference>
<dbReference type="GO" id="GO:0005759">
    <property type="term" value="C:mitochondrial matrix"/>
    <property type="evidence" value="ECO:0000318"/>
    <property type="project" value="GO_Central"/>
</dbReference>
<dbReference type="GO" id="GO:0004358">
    <property type="term" value="F:glutamate N-acetyltransferase activity"/>
    <property type="evidence" value="ECO:0007669"/>
    <property type="project" value="UniProtKB-UniRule"/>
</dbReference>
<dbReference type="GO" id="GO:0004042">
    <property type="term" value="F:L-glutamate N-acetyltransferase activity"/>
    <property type="evidence" value="ECO:0000318"/>
    <property type="project" value="GO_Central"/>
</dbReference>
<dbReference type="GO" id="GO:0006526">
    <property type="term" value="P:L-arginine biosynthetic process"/>
    <property type="evidence" value="ECO:0007669"/>
    <property type="project" value="UniProtKB-UniRule"/>
</dbReference>
<dbReference type="GO" id="GO:0006592">
    <property type="term" value="P:ornithine biosynthetic process"/>
    <property type="evidence" value="ECO:0000318"/>
    <property type="project" value="GO_Central"/>
</dbReference>
<dbReference type="CDD" id="cd02152">
    <property type="entry name" value="OAT"/>
    <property type="match status" value="1"/>
</dbReference>
<dbReference type="FunFam" id="3.10.20.340:FF:000002">
    <property type="entry name" value="Arginine biosynthesis bifunctional protein ArgJ, mitochondrial"/>
    <property type="match status" value="1"/>
</dbReference>
<dbReference type="FunFam" id="3.30.2330.10:FF:000001">
    <property type="entry name" value="Arginine biosynthesis bifunctional protein ArgJ, mitochondrial"/>
    <property type="match status" value="1"/>
</dbReference>
<dbReference type="FunFam" id="3.60.70.12:FF:000002">
    <property type="entry name" value="Arginine biosynthesis bifunctional protein ArgJ, mitochondrial"/>
    <property type="match status" value="1"/>
</dbReference>
<dbReference type="Gene3D" id="3.30.2330.10">
    <property type="entry name" value="arginine biosynthesis bifunctional protein suprefamily"/>
    <property type="match status" value="1"/>
</dbReference>
<dbReference type="Gene3D" id="3.10.20.340">
    <property type="entry name" value="ArgJ beta chain, C-terminal domain"/>
    <property type="match status" value="1"/>
</dbReference>
<dbReference type="Gene3D" id="3.60.70.12">
    <property type="entry name" value="L-amino peptidase D-ALA esterase/amidase"/>
    <property type="match status" value="1"/>
</dbReference>
<dbReference type="HAMAP" id="MF_01106">
    <property type="entry name" value="ArgJ"/>
    <property type="match status" value="1"/>
</dbReference>
<dbReference type="InterPro" id="IPR002813">
    <property type="entry name" value="Arg_biosynth_ArgJ"/>
</dbReference>
<dbReference type="InterPro" id="IPR016117">
    <property type="entry name" value="ArgJ-like_dom_sf"/>
</dbReference>
<dbReference type="InterPro" id="IPR042195">
    <property type="entry name" value="ArgJ_beta_C"/>
</dbReference>
<dbReference type="NCBIfam" id="TIGR00120">
    <property type="entry name" value="ArgJ"/>
    <property type="match status" value="1"/>
</dbReference>
<dbReference type="PANTHER" id="PTHR23100">
    <property type="entry name" value="ARGININE BIOSYNTHESIS BIFUNCTIONAL PROTEIN ARGJ"/>
    <property type="match status" value="1"/>
</dbReference>
<dbReference type="PANTHER" id="PTHR23100:SF0">
    <property type="entry name" value="ARGININE BIOSYNTHESIS BIFUNCTIONAL PROTEIN ARGJ, MITOCHONDRIAL"/>
    <property type="match status" value="1"/>
</dbReference>
<dbReference type="Pfam" id="PF01960">
    <property type="entry name" value="ArgJ"/>
    <property type="match status" value="1"/>
</dbReference>
<dbReference type="SUPFAM" id="SSF56266">
    <property type="entry name" value="DmpA/ArgJ-like"/>
    <property type="match status" value="1"/>
</dbReference>
<evidence type="ECO:0000250" key="1"/>
<evidence type="ECO:0000255" key="2">
    <source>
        <dbReference type="HAMAP-Rule" id="MF_03124"/>
    </source>
</evidence>
<proteinExistence type="inferred from homology"/>
<keyword id="KW-0012">Acyltransferase</keyword>
<keyword id="KW-0028">Amino-acid biosynthesis</keyword>
<keyword id="KW-0055">Arginine biosynthesis</keyword>
<keyword id="KW-0068">Autocatalytic cleavage</keyword>
<keyword id="KW-0496">Mitochondrion</keyword>
<keyword id="KW-0511">Multifunctional enzyme</keyword>
<keyword id="KW-1185">Reference proteome</keyword>
<keyword id="KW-0808">Transferase</keyword>
<keyword id="KW-0809">Transit peptide</keyword>
<organism>
    <name type="scientific">Sclerotinia sclerotiorum (strain ATCC 18683 / 1980 / Ss-1)</name>
    <name type="common">White mold</name>
    <name type="synonym">Whetzelinia sclerotiorum</name>
    <dbReference type="NCBI Taxonomy" id="665079"/>
    <lineage>
        <taxon>Eukaryota</taxon>
        <taxon>Fungi</taxon>
        <taxon>Dikarya</taxon>
        <taxon>Ascomycota</taxon>
        <taxon>Pezizomycotina</taxon>
        <taxon>Leotiomycetes</taxon>
        <taxon>Helotiales</taxon>
        <taxon>Sclerotiniaceae</taxon>
        <taxon>Sclerotinia</taxon>
    </lineage>
</organism>
<comment type="function">
    <text evidence="2">Catalyzes two activities which are involved in the cyclic version of arginine biosynthesis: the synthesis of acetylglutamate from glutamate and acetyl-CoA, and of ornithine by transacetylation between acetylornithine and glutamate.</text>
</comment>
<comment type="catalytic activity">
    <reaction evidence="2">
        <text>N(2)-acetyl-L-ornithine + L-glutamate = N-acetyl-L-glutamate + L-ornithine</text>
        <dbReference type="Rhea" id="RHEA:15349"/>
        <dbReference type="ChEBI" id="CHEBI:29985"/>
        <dbReference type="ChEBI" id="CHEBI:44337"/>
        <dbReference type="ChEBI" id="CHEBI:46911"/>
        <dbReference type="ChEBI" id="CHEBI:57805"/>
        <dbReference type="EC" id="2.3.1.35"/>
    </reaction>
</comment>
<comment type="catalytic activity">
    <reaction evidence="2">
        <text>L-glutamate + acetyl-CoA = N-acetyl-L-glutamate + CoA + H(+)</text>
        <dbReference type="Rhea" id="RHEA:24292"/>
        <dbReference type="ChEBI" id="CHEBI:15378"/>
        <dbReference type="ChEBI" id="CHEBI:29985"/>
        <dbReference type="ChEBI" id="CHEBI:44337"/>
        <dbReference type="ChEBI" id="CHEBI:57287"/>
        <dbReference type="ChEBI" id="CHEBI:57288"/>
        <dbReference type="EC" id="2.3.1.1"/>
    </reaction>
</comment>
<comment type="pathway">
    <text evidence="2">Amino-acid biosynthesis; L-arginine biosynthesis; L-ornithine and N-acetyl-L-glutamate from L-glutamate and N(2)-acetyl-L-ornithine (cyclic): step 1/1.</text>
</comment>
<comment type="pathway">
    <text evidence="2">Amino-acid biosynthesis; L-arginine biosynthesis; N(2)-acetyl-L-ornithine from L-glutamate: step 1/4.</text>
</comment>
<comment type="subunit">
    <text evidence="2">Heterodimer of an alpha and a beta chain.</text>
</comment>
<comment type="subcellular location">
    <subcellularLocation>
        <location evidence="2">Mitochondrion matrix</location>
    </subcellularLocation>
</comment>
<comment type="PTM">
    <text evidence="2">The alpha and beta chains are autoproteolytically processed from a single precursor protein within the mitochondrion.</text>
</comment>
<comment type="similarity">
    <text evidence="2">Belongs to the ArgJ family.</text>
</comment>
<protein>
    <recommendedName>
        <fullName>Arginine biosynthesis bifunctional protein ArgJ 2, mitochondrial</fullName>
    </recommendedName>
    <domain>
        <recommendedName>
            <fullName evidence="2">Glutamate N-acetyltransferase</fullName>
            <shortName evidence="2">GAT</shortName>
            <ecNumber evidence="2">2.3.1.35</ecNumber>
        </recommendedName>
        <alternativeName>
            <fullName evidence="2">Ornithine acetyltransferase</fullName>
            <shortName evidence="2">OATase</shortName>
        </alternativeName>
        <alternativeName>
            <fullName evidence="2">Ornithine transacetylase</fullName>
        </alternativeName>
    </domain>
    <domain>
        <recommendedName>
            <fullName evidence="2">Amino-acid acetyltransferase</fullName>
            <ecNumber evidence="2">2.3.1.1</ecNumber>
        </recommendedName>
        <alternativeName>
            <fullName evidence="2">N-acetylglutamate synthase</fullName>
            <shortName evidence="2">AGS</shortName>
        </alternativeName>
    </domain>
    <component>
        <recommendedName>
            <fullName>Arginine biosynthesis bifunctional protein ArgJ 2 alpha chain</fullName>
        </recommendedName>
    </component>
    <component>
        <recommendedName>
            <fullName>Arginine biosynthesis bifunctional protein ArgJ 2 beta chain</fullName>
        </recommendedName>
    </component>
</protein>
<sequence length="489" mass="53022">MLLISRIGARHIRKKPLHVENHYRSFTKFDSFGNSPIPASKQRFVPTSGTYPKGFLVGSTNVGIKPDGLSQPDLILVASEKKWETCGAAVLTKNEFPAASVVVTRDLLKKSKGRGLRGVVANSWCANLLTGEKGLEDSRNMSREAGRIVSGEGTGQGEESVMVMHTGMGGQRLRIDNIIQGFPNLQQEMGTTHDHWIEAARGICTTDTFPKLASRTFTLPSSPETTFSIAGITKGAGMIHPNMATTLGIICTDAPITPPALQQLLSTAADKSYNCISIEGDTSTNDMVAMLANGAAAPNNAHFPVDFDSSAESQSEDFIAFQRMLIEFMADLAKLVVRDGEGATKFITIRVRGAPTYPAGKHIASVIARSVLFKTGVYGKDPNPIGVLAALGYSLMGTEFAGKGIINPESTSVSFMPVDGTDELNFVKKGRLVKVDEVRAKKLMEEEDVEVIVDLRDDGRKWREDDEEAVYWTCDITHEFVTINGDFGN</sequence>
<gene>
    <name type="ORF">SS1G_03359</name>
</gene>
<accession>A7EDG9</accession>